<geneLocation type="chloroplast"/>
<protein>
    <recommendedName>
        <fullName evidence="2">Photosystem II D2 protein</fullName>
        <shortName evidence="2">PSII D2 protein</shortName>
        <ecNumber evidence="2">1.10.3.9</ecNumber>
    </recommendedName>
    <alternativeName>
        <fullName evidence="2">Photosystem Q(A) protein</fullName>
    </alternativeName>
</protein>
<organism>
    <name type="scientific">Nicotiana sylvestris</name>
    <name type="common">Wood tobacco</name>
    <name type="synonym">South American tobacco</name>
    <dbReference type="NCBI Taxonomy" id="4096"/>
    <lineage>
        <taxon>Eukaryota</taxon>
        <taxon>Viridiplantae</taxon>
        <taxon>Streptophyta</taxon>
        <taxon>Embryophyta</taxon>
        <taxon>Tracheophyta</taxon>
        <taxon>Spermatophyta</taxon>
        <taxon>Magnoliopsida</taxon>
        <taxon>eudicotyledons</taxon>
        <taxon>Gunneridae</taxon>
        <taxon>Pentapetalae</taxon>
        <taxon>asterids</taxon>
        <taxon>lamiids</taxon>
        <taxon>Solanales</taxon>
        <taxon>Solanaceae</taxon>
        <taxon>Nicotianoideae</taxon>
        <taxon>Nicotianeae</taxon>
        <taxon>Nicotiana</taxon>
    </lineage>
</organism>
<sequence>MTIALGKFTKDENDLFDIMDDWLRRDRFVFVGWSGLLLFPCAYFAVGGWFTGTTFVTSWYTHGLASSYLEGCNFLTAAVSTPANSLAHSLLLLWGPEAQGDFTRWCQLGGLWTFVALHGAFGLIGFMLRQFELARSVQLRPYNAIAFSGPIAVFVSVFLIYPLGQSGWFFAPSFGVAAIFRFILFFQGFHNWTLNPFHMMGVAGVLGAALLCAIHGATVENTLFEDGDGANTFRAFNPTQAEETYSMVTANRFWSQIFGVAFSNKRWLHFFMLFVPVTGLWMSALGVVGLALNLRAYDFVSQEIRAAEDPEFETFYTKNILLNEGIRAWMAAQDQPHENLIFPEEVLPRGNAL</sequence>
<comment type="function">
    <text evidence="2">Photosystem II (PSII) is a light-driven water:plastoquinone oxidoreductase that uses light energy to abstract electrons from H(2)O, generating O(2) and a proton gradient subsequently used for ATP formation. It consists of a core antenna complex that captures photons, and an electron transfer chain that converts photonic excitation into a charge separation. The D1/D2 (PsbA/PsbD) reaction center heterodimer binds P680, the primary electron donor of PSII as well as several subsequent electron acceptors. D2 is needed for assembly of a stable PSII complex.</text>
</comment>
<comment type="catalytic activity">
    <reaction evidence="2">
        <text>2 a plastoquinone + 4 hnu + 2 H2O = 2 a plastoquinol + O2</text>
        <dbReference type="Rhea" id="RHEA:36359"/>
        <dbReference type="Rhea" id="RHEA-COMP:9561"/>
        <dbReference type="Rhea" id="RHEA-COMP:9562"/>
        <dbReference type="ChEBI" id="CHEBI:15377"/>
        <dbReference type="ChEBI" id="CHEBI:15379"/>
        <dbReference type="ChEBI" id="CHEBI:17757"/>
        <dbReference type="ChEBI" id="CHEBI:30212"/>
        <dbReference type="ChEBI" id="CHEBI:62192"/>
        <dbReference type="EC" id="1.10.3.9"/>
    </reaction>
</comment>
<comment type="cofactor">
    <text evidence="2">The D1/D2 heterodimer binds P680, chlorophylls that are the primary electron donor of PSII, and subsequent electron acceptors. It shares a non-heme iron and each subunit binds pheophytin, quinone, additional chlorophylls, carotenoids and lipids. There is also a Cl(-1) ion associated with D1 and D2, which is required for oxygen evolution. The PSII complex binds additional chlorophylls, carotenoids and specific lipids.</text>
</comment>
<comment type="subunit">
    <text evidence="2">PSII is composed of 1 copy each of membrane proteins PsbA, PsbB, PsbC, PsbD, PsbE, PsbF, PsbH, PsbI, PsbJ, PsbK, PsbL, PsbM, PsbT, PsbX, PsbY, PsbZ, Psb30/Ycf12, at least 3 peripheral proteins of the oxygen-evolving complex and a large number of cofactors. It forms dimeric complexes.</text>
</comment>
<comment type="subcellular location">
    <subcellularLocation>
        <location evidence="2">Plastid</location>
        <location evidence="2">Chloroplast thylakoid membrane</location>
        <topology evidence="2">Multi-pass membrane protein</topology>
    </subcellularLocation>
</comment>
<comment type="miscellaneous">
    <text evidence="2">2 of the reaction center chlorophylls (ChlD1 and ChlD2) are entirely coordinated by water.</text>
</comment>
<comment type="similarity">
    <text evidence="2">Belongs to the reaction center PufL/M/PsbA/D family.</text>
</comment>
<feature type="initiator methionine" description="Removed" evidence="1">
    <location>
        <position position="1"/>
    </location>
</feature>
<feature type="chain" id="PRO_0000359671" description="Photosystem II D2 protein">
    <location>
        <begin position="2"/>
        <end position="353"/>
    </location>
</feature>
<feature type="transmembrane region" description="Helical" evidence="2">
    <location>
        <begin position="41"/>
        <end position="61"/>
    </location>
</feature>
<feature type="transmembrane region" description="Helical" evidence="2">
    <location>
        <begin position="125"/>
        <end position="141"/>
    </location>
</feature>
<feature type="transmembrane region" description="Helical" evidence="2">
    <location>
        <begin position="153"/>
        <end position="166"/>
    </location>
</feature>
<feature type="transmembrane region" description="Helical" evidence="2">
    <location>
        <begin position="208"/>
        <end position="228"/>
    </location>
</feature>
<feature type="transmembrane region" description="Helical" evidence="2">
    <location>
        <begin position="279"/>
        <end position="295"/>
    </location>
</feature>
<feature type="binding site" description="axial binding residue" evidence="2">
    <location>
        <position position="118"/>
    </location>
    <ligand>
        <name>chlorophyll a</name>
        <dbReference type="ChEBI" id="CHEBI:58416"/>
        <label>ChlzD2</label>
    </ligand>
    <ligandPart>
        <name>Mg</name>
        <dbReference type="ChEBI" id="CHEBI:25107"/>
    </ligandPart>
</feature>
<feature type="binding site" evidence="2">
    <location>
        <position position="130"/>
    </location>
    <ligand>
        <name>pheophytin a</name>
        <dbReference type="ChEBI" id="CHEBI:136840"/>
        <label>D2</label>
    </ligand>
</feature>
<feature type="binding site" evidence="2">
    <location>
        <position position="143"/>
    </location>
    <ligand>
        <name>pheophytin a</name>
        <dbReference type="ChEBI" id="CHEBI:136840"/>
        <label>D2</label>
    </ligand>
</feature>
<feature type="binding site" description="axial binding residue" evidence="2">
    <location>
        <position position="198"/>
    </location>
    <ligand>
        <name>chlorophyll a</name>
        <dbReference type="ChEBI" id="CHEBI:58416"/>
        <label>PD2</label>
    </ligand>
    <ligandPart>
        <name>Mg</name>
        <dbReference type="ChEBI" id="CHEBI:25107"/>
    </ligandPart>
</feature>
<feature type="binding site" evidence="2">
    <location>
        <position position="215"/>
    </location>
    <ligand>
        <name>a plastoquinone</name>
        <dbReference type="ChEBI" id="CHEBI:17757"/>
        <label>Q(A)</label>
    </ligand>
</feature>
<feature type="binding site" evidence="2">
    <location>
        <position position="215"/>
    </location>
    <ligand>
        <name>Fe cation</name>
        <dbReference type="ChEBI" id="CHEBI:24875"/>
        <note>ligand shared with heterodimeric partner</note>
    </ligand>
</feature>
<feature type="binding site" evidence="2">
    <location>
        <position position="262"/>
    </location>
    <ligand>
        <name>a plastoquinone</name>
        <dbReference type="ChEBI" id="CHEBI:17757"/>
        <label>Q(A)</label>
    </ligand>
</feature>
<feature type="binding site" evidence="2">
    <location>
        <position position="269"/>
    </location>
    <ligand>
        <name>Fe cation</name>
        <dbReference type="ChEBI" id="CHEBI:24875"/>
        <note>ligand shared with heterodimeric partner</note>
    </ligand>
</feature>
<feature type="modified residue" description="N-acetylthreonine" evidence="1">
    <location>
        <position position="2"/>
    </location>
</feature>
<feature type="modified residue" description="Phosphothreonine" evidence="1">
    <location>
        <position position="2"/>
    </location>
</feature>
<dbReference type="EC" id="1.10.3.9" evidence="2"/>
<dbReference type="EMBL" id="AB237912">
    <property type="protein sequence ID" value="BAE46643.1"/>
    <property type="molecule type" value="Genomic_DNA"/>
</dbReference>
<dbReference type="RefSeq" id="YP_358668.1">
    <property type="nucleotide sequence ID" value="NC_007500.1"/>
</dbReference>
<dbReference type="SMR" id="Q3C1I4"/>
<dbReference type="GeneID" id="3735104"/>
<dbReference type="KEGG" id="nsy:3735104"/>
<dbReference type="OrthoDB" id="31212at4085"/>
<dbReference type="Proteomes" id="UP000189701">
    <property type="component" value="Chloroplast Pltd"/>
</dbReference>
<dbReference type="GO" id="GO:0009535">
    <property type="term" value="C:chloroplast thylakoid membrane"/>
    <property type="evidence" value="ECO:0007669"/>
    <property type="project" value="UniProtKB-SubCell"/>
</dbReference>
<dbReference type="GO" id="GO:0009523">
    <property type="term" value="C:photosystem II"/>
    <property type="evidence" value="ECO:0007669"/>
    <property type="project" value="UniProtKB-KW"/>
</dbReference>
<dbReference type="GO" id="GO:0016168">
    <property type="term" value="F:chlorophyll binding"/>
    <property type="evidence" value="ECO:0007669"/>
    <property type="project" value="UniProtKB-UniRule"/>
</dbReference>
<dbReference type="GO" id="GO:0045156">
    <property type="term" value="F:electron transporter, transferring electrons within the cyclic electron transport pathway of photosynthesis activity"/>
    <property type="evidence" value="ECO:0007669"/>
    <property type="project" value="InterPro"/>
</dbReference>
<dbReference type="GO" id="GO:0005506">
    <property type="term" value="F:iron ion binding"/>
    <property type="evidence" value="ECO:0007669"/>
    <property type="project" value="UniProtKB-UniRule"/>
</dbReference>
<dbReference type="GO" id="GO:0010242">
    <property type="term" value="F:oxygen evolving activity"/>
    <property type="evidence" value="ECO:0007669"/>
    <property type="project" value="UniProtKB-EC"/>
</dbReference>
<dbReference type="GO" id="GO:0009772">
    <property type="term" value="P:photosynthetic electron transport in photosystem II"/>
    <property type="evidence" value="ECO:0007669"/>
    <property type="project" value="InterPro"/>
</dbReference>
<dbReference type="CDD" id="cd09288">
    <property type="entry name" value="Photosystem-II_D2"/>
    <property type="match status" value="1"/>
</dbReference>
<dbReference type="FunFam" id="1.20.85.10:FF:000001">
    <property type="entry name" value="photosystem II D2 protein-like"/>
    <property type="match status" value="1"/>
</dbReference>
<dbReference type="Gene3D" id="1.20.85.10">
    <property type="entry name" value="Photosystem II protein D1-like"/>
    <property type="match status" value="1"/>
</dbReference>
<dbReference type="HAMAP" id="MF_01383">
    <property type="entry name" value="PSII_PsbD_D2"/>
    <property type="match status" value="1"/>
</dbReference>
<dbReference type="InterPro" id="IPR055266">
    <property type="entry name" value="D1/D2"/>
</dbReference>
<dbReference type="InterPro" id="IPR036854">
    <property type="entry name" value="Photo_II_D1/D2_sf"/>
</dbReference>
<dbReference type="InterPro" id="IPR000484">
    <property type="entry name" value="Photo_RC_L/M"/>
</dbReference>
<dbReference type="InterPro" id="IPR055265">
    <property type="entry name" value="Photo_RC_L/M_CS"/>
</dbReference>
<dbReference type="InterPro" id="IPR005868">
    <property type="entry name" value="PSII_PsbD/D2"/>
</dbReference>
<dbReference type="NCBIfam" id="TIGR01152">
    <property type="entry name" value="psbD"/>
    <property type="match status" value="1"/>
</dbReference>
<dbReference type="PANTHER" id="PTHR33149:SF12">
    <property type="entry name" value="PHOTOSYSTEM II D2 PROTEIN"/>
    <property type="match status" value="1"/>
</dbReference>
<dbReference type="PANTHER" id="PTHR33149">
    <property type="entry name" value="PHOTOSYSTEM II PROTEIN D1"/>
    <property type="match status" value="1"/>
</dbReference>
<dbReference type="Pfam" id="PF00124">
    <property type="entry name" value="Photo_RC"/>
    <property type="match status" value="1"/>
</dbReference>
<dbReference type="PRINTS" id="PR00256">
    <property type="entry name" value="REACTNCENTRE"/>
</dbReference>
<dbReference type="SUPFAM" id="SSF81483">
    <property type="entry name" value="Bacterial photosystem II reaction centre, L and M subunits"/>
    <property type="match status" value="1"/>
</dbReference>
<dbReference type="PROSITE" id="PS00244">
    <property type="entry name" value="REACTION_CENTER"/>
    <property type="match status" value="1"/>
</dbReference>
<gene>
    <name evidence="2" type="primary">psbD</name>
</gene>
<accession>Q3C1I4</accession>
<evidence type="ECO:0000250" key="1">
    <source>
        <dbReference type="UniProtKB" id="P56761"/>
    </source>
</evidence>
<evidence type="ECO:0000255" key="2">
    <source>
        <dbReference type="HAMAP-Rule" id="MF_01383"/>
    </source>
</evidence>
<name>PSBD_NICSY</name>
<reference key="1">
    <citation type="journal article" date="2006" name="Mol. Genet. Genomics">
        <title>The chloroplast genome of Nicotiana sylvestris and Nicotiana tomentosiformis: complete sequencing confirms that the Nicotiana sylvestris progenitor is the maternal genome donor of Nicotiana tabacum.</title>
        <authorList>
            <person name="Yukawa M."/>
            <person name="Tsudzuki T."/>
            <person name="Sugiura M."/>
        </authorList>
    </citation>
    <scope>NUCLEOTIDE SEQUENCE [LARGE SCALE GENOMIC DNA]</scope>
</reference>
<proteinExistence type="inferred from homology"/>
<keyword id="KW-0007">Acetylation</keyword>
<keyword id="KW-0148">Chlorophyll</keyword>
<keyword id="KW-0150">Chloroplast</keyword>
<keyword id="KW-0157">Chromophore</keyword>
<keyword id="KW-0249">Electron transport</keyword>
<keyword id="KW-0408">Iron</keyword>
<keyword id="KW-0460">Magnesium</keyword>
<keyword id="KW-0472">Membrane</keyword>
<keyword id="KW-0479">Metal-binding</keyword>
<keyword id="KW-0560">Oxidoreductase</keyword>
<keyword id="KW-0597">Phosphoprotein</keyword>
<keyword id="KW-0602">Photosynthesis</keyword>
<keyword id="KW-0604">Photosystem II</keyword>
<keyword id="KW-0934">Plastid</keyword>
<keyword id="KW-1185">Reference proteome</keyword>
<keyword id="KW-0793">Thylakoid</keyword>
<keyword id="KW-0812">Transmembrane</keyword>
<keyword id="KW-1133">Transmembrane helix</keyword>
<keyword id="KW-0813">Transport</keyword>